<feature type="chain" id="PRO_0000086278" description="Mitogen-activated protein kinase kinase kinase kinase 3">
    <location>
        <begin position="1"/>
        <end position="894"/>
    </location>
</feature>
<feature type="domain" description="Protein kinase" evidence="3">
    <location>
        <begin position="16"/>
        <end position="273"/>
    </location>
</feature>
<feature type="domain" description="CNH" evidence="4">
    <location>
        <begin position="556"/>
        <end position="867"/>
    </location>
</feature>
<feature type="region of interest" description="Disordered" evidence="5">
    <location>
        <begin position="339"/>
        <end position="358"/>
    </location>
</feature>
<feature type="region of interest" description="Disordered" evidence="5">
    <location>
        <begin position="408"/>
        <end position="537"/>
    </location>
</feature>
<feature type="compositionally biased region" description="Basic and acidic residues" evidence="5">
    <location>
        <begin position="340"/>
        <end position="353"/>
    </location>
</feature>
<feature type="compositionally biased region" description="Pro residues" evidence="5">
    <location>
        <begin position="473"/>
        <end position="487"/>
    </location>
</feature>
<feature type="compositionally biased region" description="Polar residues" evidence="5">
    <location>
        <begin position="508"/>
        <end position="520"/>
    </location>
</feature>
<feature type="active site" description="Proton acceptor" evidence="3">
    <location>
        <position position="136"/>
    </location>
</feature>
<feature type="binding site" evidence="3">
    <location>
        <begin position="22"/>
        <end position="30"/>
    </location>
    <ligand>
        <name>ATP</name>
        <dbReference type="ChEBI" id="CHEBI:30616"/>
    </ligand>
</feature>
<feature type="binding site" evidence="3">
    <location>
        <position position="45"/>
    </location>
    <ligand>
        <name>ATP</name>
        <dbReference type="ChEBI" id="CHEBI:30616"/>
    </ligand>
</feature>
<feature type="modified residue" description="N-acetylmethionine" evidence="1">
    <location>
        <position position="1"/>
    </location>
</feature>
<feature type="modified residue" description="Phosphoserine" evidence="8">
    <location>
        <position position="329"/>
    </location>
</feature>
<feature type="modified residue" description="Phosphoserine" evidence="1">
    <location>
        <position position="398"/>
    </location>
</feature>
<feature type="sequence conflict" description="In Ref. 3; AAH05781." evidence="6" ref="3">
    <original>P</original>
    <variation>R</variation>
    <location>
        <position position="874"/>
    </location>
</feature>
<accession>Q99JP0</accession>
<accession>E9PWI4</accession>
<accession>Q9CUS8</accession>
<gene>
    <name type="primary">Map4k3</name>
</gene>
<name>M4K3_MOUSE</name>
<keyword id="KW-0007">Acetylation</keyword>
<keyword id="KW-0067">ATP-binding</keyword>
<keyword id="KW-0418">Kinase</keyword>
<keyword id="KW-0547">Nucleotide-binding</keyword>
<keyword id="KW-0597">Phosphoprotein</keyword>
<keyword id="KW-1185">Reference proteome</keyword>
<keyword id="KW-0723">Serine/threonine-protein kinase</keyword>
<keyword id="KW-0808">Transferase</keyword>
<reference key="1">
    <citation type="journal article" date="2009" name="PLoS Biol.">
        <title>Lineage-specific biology revealed by a finished genome assembly of the mouse.</title>
        <authorList>
            <person name="Church D.M."/>
            <person name="Goodstadt L."/>
            <person name="Hillier L.W."/>
            <person name="Zody M.C."/>
            <person name="Goldstein S."/>
            <person name="She X."/>
            <person name="Bult C.J."/>
            <person name="Agarwala R."/>
            <person name="Cherry J.L."/>
            <person name="DiCuccio M."/>
            <person name="Hlavina W."/>
            <person name="Kapustin Y."/>
            <person name="Meric P."/>
            <person name="Maglott D."/>
            <person name="Birtle Z."/>
            <person name="Marques A.C."/>
            <person name="Graves T."/>
            <person name="Zhou S."/>
            <person name="Teague B."/>
            <person name="Potamousis K."/>
            <person name="Churas C."/>
            <person name="Place M."/>
            <person name="Herschleb J."/>
            <person name="Runnheim R."/>
            <person name="Forrest D."/>
            <person name="Amos-Landgraf J."/>
            <person name="Schwartz D.C."/>
            <person name="Cheng Z."/>
            <person name="Lindblad-Toh K."/>
            <person name="Eichler E.E."/>
            <person name="Ponting C.P."/>
        </authorList>
    </citation>
    <scope>NUCLEOTIDE SEQUENCE [LARGE SCALE GENOMIC DNA]</scope>
    <source>
        <strain>C57BL/6J</strain>
    </source>
</reference>
<reference key="2">
    <citation type="journal article" date="2005" name="Science">
        <title>The transcriptional landscape of the mammalian genome.</title>
        <authorList>
            <person name="Carninci P."/>
            <person name="Kasukawa T."/>
            <person name="Katayama S."/>
            <person name="Gough J."/>
            <person name="Frith M.C."/>
            <person name="Maeda N."/>
            <person name="Oyama R."/>
            <person name="Ravasi T."/>
            <person name="Lenhard B."/>
            <person name="Wells C."/>
            <person name="Kodzius R."/>
            <person name="Shimokawa K."/>
            <person name="Bajic V.B."/>
            <person name="Brenner S.E."/>
            <person name="Batalov S."/>
            <person name="Forrest A.R."/>
            <person name="Zavolan M."/>
            <person name="Davis M.J."/>
            <person name="Wilming L.G."/>
            <person name="Aidinis V."/>
            <person name="Allen J.E."/>
            <person name="Ambesi-Impiombato A."/>
            <person name="Apweiler R."/>
            <person name="Aturaliya R.N."/>
            <person name="Bailey T.L."/>
            <person name="Bansal M."/>
            <person name="Baxter L."/>
            <person name="Beisel K.W."/>
            <person name="Bersano T."/>
            <person name="Bono H."/>
            <person name="Chalk A.M."/>
            <person name="Chiu K.P."/>
            <person name="Choudhary V."/>
            <person name="Christoffels A."/>
            <person name="Clutterbuck D.R."/>
            <person name="Crowe M.L."/>
            <person name="Dalla E."/>
            <person name="Dalrymple B.P."/>
            <person name="de Bono B."/>
            <person name="Della Gatta G."/>
            <person name="di Bernardo D."/>
            <person name="Down T."/>
            <person name="Engstrom P."/>
            <person name="Fagiolini M."/>
            <person name="Faulkner G."/>
            <person name="Fletcher C.F."/>
            <person name="Fukushima T."/>
            <person name="Furuno M."/>
            <person name="Futaki S."/>
            <person name="Gariboldi M."/>
            <person name="Georgii-Hemming P."/>
            <person name="Gingeras T.R."/>
            <person name="Gojobori T."/>
            <person name="Green R.E."/>
            <person name="Gustincich S."/>
            <person name="Harbers M."/>
            <person name="Hayashi Y."/>
            <person name="Hensch T.K."/>
            <person name="Hirokawa N."/>
            <person name="Hill D."/>
            <person name="Huminiecki L."/>
            <person name="Iacono M."/>
            <person name="Ikeo K."/>
            <person name="Iwama A."/>
            <person name="Ishikawa T."/>
            <person name="Jakt M."/>
            <person name="Kanapin A."/>
            <person name="Katoh M."/>
            <person name="Kawasawa Y."/>
            <person name="Kelso J."/>
            <person name="Kitamura H."/>
            <person name="Kitano H."/>
            <person name="Kollias G."/>
            <person name="Krishnan S.P."/>
            <person name="Kruger A."/>
            <person name="Kummerfeld S.K."/>
            <person name="Kurochkin I.V."/>
            <person name="Lareau L.F."/>
            <person name="Lazarevic D."/>
            <person name="Lipovich L."/>
            <person name="Liu J."/>
            <person name="Liuni S."/>
            <person name="McWilliam S."/>
            <person name="Madan Babu M."/>
            <person name="Madera M."/>
            <person name="Marchionni L."/>
            <person name="Matsuda H."/>
            <person name="Matsuzawa S."/>
            <person name="Miki H."/>
            <person name="Mignone F."/>
            <person name="Miyake S."/>
            <person name="Morris K."/>
            <person name="Mottagui-Tabar S."/>
            <person name="Mulder N."/>
            <person name="Nakano N."/>
            <person name="Nakauchi H."/>
            <person name="Ng P."/>
            <person name="Nilsson R."/>
            <person name="Nishiguchi S."/>
            <person name="Nishikawa S."/>
            <person name="Nori F."/>
            <person name="Ohara O."/>
            <person name="Okazaki Y."/>
            <person name="Orlando V."/>
            <person name="Pang K.C."/>
            <person name="Pavan W.J."/>
            <person name="Pavesi G."/>
            <person name="Pesole G."/>
            <person name="Petrovsky N."/>
            <person name="Piazza S."/>
            <person name="Reed J."/>
            <person name="Reid J.F."/>
            <person name="Ring B.Z."/>
            <person name="Ringwald M."/>
            <person name="Rost B."/>
            <person name="Ruan Y."/>
            <person name="Salzberg S.L."/>
            <person name="Sandelin A."/>
            <person name="Schneider C."/>
            <person name="Schoenbach C."/>
            <person name="Sekiguchi K."/>
            <person name="Semple C.A."/>
            <person name="Seno S."/>
            <person name="Sessa L."/>
            <person name="Sheng Y."/>
            <person name="Shibata Y."/>
            <person name="Shimada H."/>
            <person name="Shimada K."/>
            <person name="Silva D."/>
            <person name="Sinclair B."/>
            <person name="Sperling S."/>
            <person name="Stupka E."/>
            <person name="Sugiura K."/>
            <person name="Sultana R."/>
            <person name="Takenaka Y."/>
            <person name="Taki K."/>
            <person name="Tammoja K."/>
            <person name="Tan S.L."/>
            <person name="Tang S."/>
            <person name="Taylor M.S."/>
            <person name="Tegner J."/>
            <person name="Teichmann S.A."/>
            <person name="Ueda H.R."/>
            <person name="van Nimwegen E."/>
            <person name="Verardo R."/>
            <person name="Wei C.L."/>
            <person name="Yagi K."/>
            <person name="Yamanishi H."/>
            <person name="Zabarovsky E."/>
            <person name="Zhu S."/>
            <person name="Zimmer A."/>
            <person name="Hide W."/>
            <person name="Bult C."/>
            <person name="Grimmond S.M."/>
            <person name="Teasdale R.D."/>
            <person name="Liu E.T."/>
            <person name="Brusic V."/>
            <person name="Quackenbush J."/>
            <person name="Wahlestedt C."/>
            <person name="Mattick J.S."/>
            <person name="Hume D.A."/>
            <person name="Kai C."/>
            <person name="Sasaki D."/>
            <person name="Tomaru Y."/>
            <person name="Fukuda S."/>
            <person name="Kanamori-Katayama M."/>
            <person name="Suzuki M."/>
            <person name="Aoki J."/>
            <person name="Arakawa T."/>
            <person name="Iida J."/>
            <person name="Imamura K."/>
            <person name="Itoh M."/>
            <person name="Kato T."/>
            <person name="Kawaji H."/>
            <person name="Kawagashira N."/>
            <person name="Kawashima T."/>
            <person name="Kojima M."/>
            <person name="Kondo S."/>
            <person name="Konno H."/>
            <person name="Nakano K."/>
            <person name="Ninomiya N."/>
            <person name="Nishio T."/>
            <person name="Okada M."/>
            <person name="Plessy C."/>
            <person name="Shibata K."/>
            <person name="Shiraki T."/>
            <person name="Suzuki S."/>
            <person name="Tagami M."/>
            <person name="Waki K."/>
            <person name="Watahiki A."/>
            <person name="Okamura-Oho Y."/>
            <person name="Suzuki H."/>
            <person name="Kawai J."/>
            <person name="Hayashizaki Y."/>
        </authorList>
    </citation>
    <scope>NUCLEOTIDE SEQUENCE [LARGE SCALE MRNA] OF 1-255</scope>
    <source>
        <strain>C57BL/6J</strain>
        <tissue>Head</tissue>
    </source>
</reference>
<reference key="3">
    <citation type="journal article" date="2004" name="Genome Res.">
        <title>The status, quality, and expansion of the NIH full-length cDNA project: the Mammalian Gene Collection (MGC).</title>
        <authorList>
            <consortium name="The MGC Project Team"/>
        </authorList>
    </citation>
    <scope>NUCLEOTIDE SEQUENCE [LARGE SCALE MRNA] OF 469-894</scope>
    <source>
        <tissue>Mammary gland</tissue>
    </source>
</reference>
<reference key="4">
    <citation type="journal article" date="2006" name="Mol. Cell. Proteomics">
        <title>Comprehensive identification of phosphorylation sites in postsynaptic density preparations.</title>
        <authorList>
            <person name="Trinidad J.C."/>
            <person name="Specht C.G."/>
            <person name="Thalhammer A."/>
            <person name="Schoepfer R."/>
            <person name="Burlingame A.L."/>
        </authorList>
    </citation>
    <scope>IDENTIFICATION BY MASS SPECTROMETRY [LARGE SCALE ANALYSIS]</scope>
    <source>
        <tissue>Brain</tissue>
    </source>
</reference>
<reference key="5">
    <citation type="journal article" date="2010" name="Cell">
        <title>A tissue-specific atlas of mouse protein phosphorylation and expression.</title>
        <authorList>
            <person name="Huttlin E.L."/>
            <person name="Jedrychowski M.P."/>
            <person name="Elias J.E."/>
            <person name="Goswami T."/>
            <person name="Rad R."/>
            <person name="Beausoleil S.A."/>
            <person name="Villen J."/>
            <person name="Haas W."/>
            <person name="Sowa M.E."/>
            <person name="Gygi S.P."/>
        </authorList>
    </citation>
    <scope>PHOSPHORYLATION [LARGE SCALE ANALYSIS] AT SER-329</scope>
    <scope>IDENTIFICATION BY MASS SPECTROMETRY [LARGE SCALE ANALYSIS]</scope>
    <source>
        <tissue>Brain</tissue>
        <tissue>Brown adipose tissue</tissue>
        <tissue>Kidney</tissue>
        <tissue>Lung</tissue>
        <tissue>Spleen</tissue>
    </source>
</reference>
<sequence>MNPGFDLSRRNPQEDFELIQRIGSGTYGDVYKARNVNTGELAAIKVIKLEPGEDFAVVQQEIIMMKDCKHPNIVAYFGSYLRRDKLWICMEFCGGGSLQDIYHVTGPLSELQIAYVSRETLQGLYYLHSKGKMHRDIKGANILLTDNGHVKLADFGVSAQITATIAKRKSFIGTPYWMAPEVAAVERKGGYNQLCDLWAVGITAIELAELQPPMFDLHPMRALFLMTKSNFQPPKLKDKLKWSNSFHHFVKMALTKNPKKRPNAEKLLQHPFVTQPLTRSLAIELLDKVNNPDHSTYHDFDDDDPEPLVAVPHRIPSTSRNVREEKTRSEINFGQVKFDPPLRKETEPHHELPDSDGFFDSSEEIYYTARSNLDLQLEYGQGHQSHCFLGGNKSLLKSVEEELHQRGHVAHLEDDEGDDDDSKHSTMKAKVPPPLPPKPKSIFIPQDTHSAEDGNQGTIKRCPSSGSPAKPSHVPPRPPPPRLPPQKPAVLGNGVNSFQLNGERDGSLYQQQSEQRGTNLSRKEKKDVPKPISNGLPPTPKVHMGACFSKVFNGCPLKIHCATSWINPDTRDQYLIFGAEEGIYTLNLNELHETSMEQLFPRRCTWLYVMNNCLLSVSGKASQLYSHNLPGLFDYARQMQKLPVAIPAHKLPDRILPRKFAVSAKIPETKWCQKCCVVRNPYTGHKYLCGALQTSIVLLEWVEPMQKFMLIKHIEFPMPCPLRMFEMLVVPEQEYPLVCVGVSRGRDFNQVVRFETVNPNSTSSWFTESDAPQTSVTHVTQLERDTILVCLDCCIKIVNLQGRLKSSRKLSSELTFDFQIESIVCLQDSVLAFWKHGMQGRSFRSNEVTQEISDNTRIFRLLGSDRVVVLESRPTDNPTANSNLYILAGHENSY</sequence>
<organism evidence="7">
    <name type="scientific">Mus musculus</name>
    <name type="common">Mouse</name>
    <dbReference type="NCBI Taxonomy" id="10090"/>
    <lineage>
        <taxon>Eukaryota</taxon>
        <taxon>Metazoa</taxon>
        <taxon>Chordata</taxon>
        <taxon>Craniata</taxon>
        <taxon>Vertebrata</taxon>
        <taxon>Euteleostomi</taxon>
        <taxon>Mammalia</taxon>
        <taxon>Eutheria</taxon>
        <taxon>Euarchontoglires</taxon>
        <taxon>Glires</taxon>
        <taxon>Rodentia</taxon>
        <taxon>Myomorpha</taxon>
        <taxon>Muroidea</taxon>
        <taxon>Muridae</taxon>
        <taxon>Murinae</taxon>
        <taxon>Mus</taxon>
        <taxon>Mus</taxon>
    </lineage>
</organism>
<protein>
    <recommendedName>
        <fullName>Mitogen-activated protein kinase kinase kinase kinase 3</fullName>
        <ecNumber>2.7.11.1</ecNumber>
    </recommendedName>
    <alternativeName>
        <fullName>Germinal center kinase-related protein kinase</fullName>
        <shortName>GLK</shortName>
    </alternativeName>
    <alternativeName>
        <fullName>MAPK/ERK kinase kinase kinase 3</fullName>
        <shortName>MEK kinase kinase 3</shortName>
        <shortName>MEKKK 3</shortName>
    </alternativeName>
</protein>
<evidence type="ECO:0000250" key="1">
    <source>
        <dbReference type="UniProtKB" id="Q8IVH8"/>
    </source>
</evidence>
<evidence type="ECO:0000250" key="2">
    <source>
        <dbReference type="UniProtKB" id="Q924I2"/>
    </source>
</evidence>
<evidence type="ECO:0000255" key="3">
    <source>
        <dbReference type="PROSITE-ProRule" id="PRU00159"/>
    </source>
</evidence>
<evidence type="ECO:0000255" key="4">
    <source>
        <dbReference type="PROSITE-ProRule" id="PRU00795"/>
    </source>
</evidence>
<evidence type="ECO:0000256" key="5">
    <source>
        <dbReference type="SAM" id="MobiDB-lite"/>
    </source>
</evidence>
<evidence type="ECO:0000305" key="6"/>
<evidence type="ECO:0000312" key="7">
    <source>
        <dbReference type="EMBL" id="AAH05781.1"/>
    </source>
</evidence>
<evidence type="ECO:0007744" key="8">
    <source>
    </source>
</evidence>
<dbReference type="EC" id="2.7.11.1"/>
<dbReference type="EMBL" id="AC131712">
    <property type="status" value="NOT_ANNOTATED_CDS"/>
    <property type="molecule type" value="Genomic_DNA"/>
</dbReference>
<dbReference type="EMBL" id="AC169501">
    <property type="status" value="NOT_ANNOTATED_CDS"/>
    <property type="molecule type" value="Genomic_DNA"/>
</dbReference>
<dbReference type="EMBL" id="AK014711">
    <property type="protein sequence ID" value="BAB29516.1"/>
    <property type="molecule type" value="mRNA"/>
</dbReference>
<dbReference type="EMBL" id="BC005781">
    <property type="protein sequence ID" value="AAH05781.1"/>
    <property type="molecule type" value="mRNA"/>
</dbReference>
<dbReference type="CCDS" id="CCDS70847.1"/>
<dbReference type="RefSeq" id="NP_001277274.1">
    <property type="nucleotide sequence ID" value="NM_001290345.1"/>
</dbReference>
<dbReference type="SMR" id="Q99JP0"/>
<dbReference type="BioGRID" id="230353">
    <property type="interactions" value="2"/>
</dbReference>
<dbReference type="FunCoup" id="Q99JP0">
    <property type="interactions" value="2984"/>
</dbReference>
<dbReference type="IntAct" id="Q99JP0">
    <property type="interactions" value="3"/>
</dbReference>
<dbReference type="STRING" id="10090.ENSMUSP00000025089"/>
<dbReference type="iPTMnet" id="Q99JP0"/>
<dbReference type="PhosphoSitePlus" id="Q99JP0"/>
<dbReference type="PaxDb" id="10090-ENSMUSP00000108008"/>
<dbReference type="PeptideAtlas" id="Q99JP0"/>
<dbReference type="ProteomicsDB" id="252702"/>
<dbReference type="Pumba" id="Q99JP0"/>
<dbReference type="Antibodypedia" id="29616">
    <property type="antibodies" value="349 antibodies from 33 providers"/>
</dbReference>
<dbReference type="DNASU" id="225028"/>
<dbReference type="Ensembl" id="ENSMUST00000025089.9">
    <property type="protein sequence ID" value="ENSMUSP00000025089.8"/>
    <property type="gene ID" value="ENSMUSG00000024242.16"/>
</dbReference>
<dbReference type="GeneID" id="225028"/>
<dbReference type="KEGG" id="mmu:225028"/>
<dbReference type="UCSC" id="uc008drj.2">
    <property type="organism name" value="mouse"/>
</dbReference>
<dbReference type="AGR" id="MGI:2154405"/>
<dbReference type="CTD" id="8491"/>
<dbReference type="MGI" id="MGI:2154405">
    <property type="gene designation" value="Map4k3"/>
</dbReference>
<dbReference type="VEuPathDB" id="HostDB:ENSMUSG00000024242"/>
<dbReference type="eggNOG" id="KOG0576">
    <property type="taxonomic scope" value="Eukaryota"/>
</dbReference>
<dbReference type="GeneTree" id="ENSGT00940000155483"/>
<dbReference type="HOGENOM" id="CLU_006347_1_0_1"/>
<dbReference type="InParanoid" id="Q99JP0"/>
<dbReference type="OMA" id="VIKLEPX"/>
<dbReference type="BioGRID-ORCS" id="225028">
    <property type="hits" value="3 hits in 77 CRISPR screens"/>
</dbReference>
<dbReference type="CD-CODE" id="CE726F99">
    <property type="entry name" value="Postsynaptic density"/>
</dbReference>
<dbReference type="ChiTaRS" id="Map4k3">
    <property type="organism name" value="mouse"/>
</dbReference>
<dbReference type="PRO" id="PR:Q99JP0"/>
<dbReference type="Proteomes" id="UP000000589">
    <property type="component" value="Chromosome 17"/>
</dbReference>
<dbReference type="RNAct" id="Q99JP0">
    <property type="molecule type" value="protein"/>
</dbReference>
<dbReference type="Bgee" id="ENSMUSG00000024242">
    <property type="expression patterns" value="Expressed in vestibular membrane of cochlear duct and 269 other cell types or tissues"/>
</dbReference>
<dbReference type="ExpressionAtlas" id="Q99JP0">
    <property type="expression patterns" value="baseline and differential"/>
</dbReference>
<dbReference type="GO" id="GO:0005524">
    <property type="term" value="F:ATP binding"/>
    <property type="evidence" value="ECO:0000250"/>
    <property type="project" value="UniProtKB"/>
</dbReference>
<dbReference type="GO" id="GO:0008349">
    <property type="term" value="F:MAP kinase kinase kinase kinase activity"/>
    <property type="evidence" value="ECO:0007669"/>
    <property type="project" value="InterPro"/>
</dbReference>
<dbReference type="GO" id="GO:0106310">
    <property type="term" value="F:protein serine kinase activity"/>
    <property type="evidence" value="ECO:0007669"/>
    <property type="project" value="RHEA"/>
</dbReference>
<dbReference type="GO" id="GO:0004674">
    <property type="term" value="F:protein serine/threonine kinase activity"/>
    <property type="evidence" value="ECO:0000250"/>
    <property type="project" value="UniProtKB"/>
</dbReference>
<dbReference type="GO" id="GO:0035556">
    <property type="term" value="P:intracellular signal transduction"/>
    <property type="evidence" value="ECO:0000250"/>
    <property type="project" value="UniProtKB"/>
</dbReference>
<dbReference type="GO" id="GO:0006468">
    <property type="term" value="P:protein phosphorylation"/>
    <property type="evidence" value="ECO:0000250"/>
    <property type="project" value="UniProtKB"/>
</dbReference>
<dbReference type="GO" id="GO:0009411">
    <property type="term" value="P:response to UV"/>
    <property type="evidence" value="ECO:0000250"/>
    <property type="project" value="UniProtKB"/>
</dbReference>
<dbReference type="CDD" id="cd06613">
    <property type="entry name" value="STKc_MAP4K3_like"/>
    <property type="match status" value="1"/>
</dbReference>
<dbReference type="FunFam" id="1.10.510.10:FF:000031">
    <property type="entry name" value="Mitogen-activated protein kinase kinase kinase kinase"/>
    <property type="match status" value="1"/>
</dbReference>
<dbReference type="Gene3D" id="1.10.510.10">
    <property type="entry name" value="Transferase(Phosphotransferase) domain 1"/>
    <property type="match status" value="1"/>
</dbReference>
<dbReference type="InterPro" id="IPR001180">
    <property type="entry name" value="CNH_dom"/>
</dbReference>
<dbReference type="InterPro" id="IPR011009">
    <property type="entry name" value="Kinase-like_dom_sf"/>
</dbReference>
<dbReference type="InterPro" id="IPR021160">
    <property type="entry name" value="MAPKKKK"/>
</dbReference>
<dbReference type="InterPro" id="IPR000719">
    <property type="entry name" value="Prot_kinase_dom"/>
</dbReference>
<dbReference type="InterPro" id="IPR017441">
    <property type="entry name" value="Protein_kinase_ATP_BS"/>
</dbReference>
<dbReference type="InterPro" id="IPR050629">
    <property type="entry name" value="STE20/SPS1-PAK"/>
</dbReference>
<dbReference type="PANTHER" id="PTHR48012:SF17">
    <property type="entry name" value="MITOGEN-ACTIVATED PROTEIN KINASE KINASE KINASE KINASE 3"/>
    <property type="match status" value="1"/>
</dbReference>
<dbReference type="PANTHER" id="PTHR48012">
    <property type="entry name" value="STERILE20-LIKE KINASE, ISOFORM B-RELATED"/>
    <property type="match status" value="1"/>
</dbReference>
<dbReference type="Pfam" id="PF00780">
    <property type="entry name" value="CNH"/>
    <property type="match status" value="1"/>
</dbReference>
<dbReference type="Pfam" id="PF00069">
    <property type="entry name" value="Pkinase"/>
    <property type="match status" value="1"/>
</dbReference>
<dbReference type="PIRSF" id="PIRSF038172">
    <property type="entry name" value="MAPKKKK"/>
    <property type="match status" value="1"/>
</dbReference>
<dbReference type="SMART" id="SM00036">
    <property type="entry name" value="CNH"/>
    <property type="match status" value="1"/>
</dbReference>
<dbReference type="SMART" id="SM00220">
    <property type="entry name" value="S_TKc"/>
    <property type="match status" value="1"/>
</dbReference>
<dbReference type="SUPFAM" id="SSF56112">
    <property type="entry name" value="Protein kinase-like (PK-like)"/>
    <property type="match status" value="1"/>
</dbReference>
<dbReference type="PROSITE" id="PS50219">
    <property type="entry name" value="CNH"/>
    <property type="match status" value="1"/>
</dbReference>
<dbReference type="PROSITE" id="PS00107">
    <property type="entry name" value="PROTEIN_KINASE_ATP"/>
    <property type="match status" value="1"/>
</dbReference>
<dbReference type="PROSITE" id="PS50011">
    <property type="entry name" value="PROTEIN_KINASE_DOM"/>
    <property type="match status" value="1"/>
</dbReference>
<proteinExistence type="evidence at protein level"/>
<comment type="function">
    <text evidence="1">Serine/threonine kinase that plays a role in the response to environmental stress. Appears to act upstream of the JUN N-terminal pathway. Activator of the Hippo signaling pathway which plays a pivotal role in organ size control and tumor suppression by restricting proliferation and promoting apoptosis. MAP4Ks act in parallel to and are partially redundant with STK3/MST2 and STK4/MST2 in the phosphorylation and activation of LATS1/2, and establish MAP4Ks as components of the expanded Hippo pathway.</text>
</comment>
<comment type="catalytic activity">
    <reaction evidence="1">
        <text>L-seryl-[protein] + ATP = O-phospho-L-seryl-[protein] + ADP + H(+)</text>
        <dbReference type="Rhea" id="RHEA:17989"/>
        <dbReference type="Rhea" id="RHEA-COMP:9863"/>
        <dbReference type="Rhea" id="RHEA-COMP:11604"/>
        <dbReference type="ChEBI" id="CHEBI:15378"/>
        <dbReference type="ChEBI" id="CHEBI:29999"/>
        <dbReference type="ChEBI" id="CHEBI:30616"/>
        <dbReference type="ChEBI" id="CHEBI:83421"/>
        <dbReference type="ChEBI" id="CHEBI:456216"/>
        <dbReference type="EC" id="2.7.11.1"/>
    </reaction>
</comment>
<comment type="catalytic activity">
    <reaction evidence="1">
        <text>L-threonyl-[protein] + ATP = O-phospho-L-threonyl-[protein] + ADP + H(+)</text>
        <dbReference type="Rhea" id="RHEA:46608"/>
        <dbReference type="Rhea" id="RHEA-COMP:11060"/>
        <dbReference type="Rhea" id="RHEA-COMP:11605"/>
        <dbReference type="ChEBI" id="CHEBI:15378"/>
        <dbReference type="ChEBI" id="CHEBI:30013"/>
        <dbReference type="ChEBI" id="CHEBI:30616"/>
        <dbReference type="ChEBI" id="CHEBI:61977"/>
        <dbReference type="ChEBI" id="CHEBI:456216"/>
        <dbReference type="EC" id="2.7.11.1"/>
    </reaction>
</comment>
<comment type="cofactor">
    <cofactor evidence="1">
        <name>Mg(2+)</name>
        <dbReference type="ChEBI" id="CHEBI:18420"/>
    </cofactor>
</comment>
<comment type="subunit">
    <text evidence="2">Interacts with SH3GL2. Interaction appears to regulate MAP4K3-mediated JNK activation (By similarity).</text>
</comment>
<comment type="interaction">
    <interactant intactId="EBI-5324222">
        <id>Q99JP0</id>
    </interactant>
    <interactant intactId="EBI-2639157">
        <id>Q02111</id>
        <label>Prkcq</label>
    </interactant>
    <organismsDiffer>false</organismsDiffer>
    <experiments>2</experiments>
</comment>
<comment type="interaction">
    <interactant intactId="EBI-5324222">
        <id>Q99JP0</id>
    </interactant>
    <interactant intactId="EBI-346946">
        <id>Q13094</id>
        <label>LCP2</label>
    </interactant>
    <organismsDiffer>true</organismsDiffer>
    <experiments>2</experiments>
</comment>
<comment type="similarity">
    <text evidence="6">Belongs to the protein kinase superfamily. STE Ser/Thr protein kinase family. STE20 subfamily.</text>
</comment>